<accession>Q8NGQ6</accession>
<accession>Q6IFH0</accession>
<accession>Q96RA8</accession>
<feature type="chain" id="PRO_0000150681" description="Olfactory receptor 9I1">
    <location>
        <begin position="1"/>
        <end position="314"/>
    </location>
</feature>
<feature type="topological domain" description="Extracellular" evidence="1">
    <location>
        <begin position="1"/>
        <end position="25"/>
    </location>
</feature>
<feature type="transmembrane region" description="Helical; Name=1" evidence="1">
    <location>
        <begin position="26"/>
        <end position="46"/>
    </location>
</feature>
<feature type="topological domain" description="Cytoplasmic" evidence="1">
    <location>
        <begin position="47"/>
        <end position="54"/>
    </location>
</feature>
<feature type="transmembrane region" description="Helical; Name=2" evidence="1">
    <location>
        <begin position="55"/>
        <end position="75"/>
    </location>
</feature>
<feature type="topological domain" description="Extracellular" evidence="1">
    <location>
        <begin position="76"/>
        <end position="99"/>
    </location>
</feature>
<feature type="transmembrane region" description="Helical; Name=3" evidence="1">
    <location>
        <begin position="100"/>
        <end position="120"/>
    </location>
</feature>
<feature type="topological domain" description="Cytoplasmic" evidence="1">
    <location>
        <begin position="121"/>
        <end position="139"/>
    </location>
</feature>
<feature type="transmembrane region" description="Helical; Name=4" evidence="1">
    <location>
        <begin position="140"/>
        <end position="160"/>
    </location>
</feature>
<feature type="topological domain" description="Extracellular" evidence="1">
    <location>
        <begin position="161"/>
        <end position="197"/>
    </location>
</feature>
<feature type="transmembrane region" description="Helical; Name=5" evidence="1">
    <location>
        <begin position="198"/>
        <end position="217"/>
    </location>
</feature>
<feature type="topological domain" description="Cytoplasmic" evidence="1">
    <location>
        <begin position="218"/>
        <end position="237"/>
    </location>
</feature>
<feature type="transmembrane region" description="Helical; Name=6" evidence="1">
    <location>
        <begin position="238"/>
        <end position="258"/>
    </location>
</feature>
<feature type="topological domain" description="Extracellular" evidence="1">
    <location>
        <begin position="259"/>
        <end position="271"/>
    </location>
</feature>
<feature type="transmembrane region" description="Helical; Name=7" evidence="1">
    <location>
        <begin position="272"/>
        <end position="292"/>
    </location>
</feature>
<feature type="topological domain" description="Cytoplasmic" evidence="1">
    <location>
        <begin position="293"/>
        <end position="314"/>
    </location>
</feature>
<feature type="glycosylation site" description="N-linked (GlcNAc...) asparagine" evidence="1">
    <location>
        <position position="5"/>
    </location>
</feature>
<feature type="disulfide bond" evidence="2">
    <location>
        <begin position="97"/>
        <end position="189"/>
    </location>
</feature>
<keyword id="KW-1003">Cell membrane</keyword>
<keyword id="KW-1015">Disulfide bond</keyword>
<keyword id="KW-0297">G-protein coupled receptor</keyword>
<keyword id="KW-0325">Glycoprotein</keyword>
<keyword id="KW-0472">Membrane</keyword>
<keyword id="KW-0552">Olfaction</keyword>
<keyword id="KW-0675">Receptor</keyword>
<keyword id="KW-1185">Reference proteome</keyword>
<keyword id="KW-0716">Sensory transduction</keyword>
<keyword id="KW-0807">Transducer</keyword>
<keyword id="KW-0812">Transmembrane</keyword>
<keyword id="KW-1133">Transmembrane helix</keyword>
<protein>
    <recommendedName>
        <fullName>Olfactory receptor 9I1</fullName>
    </recommendedName>
    <alternativeName>
        <fullName>Olfactory receptor OR11-228</fullName>
    </alternativeName>
</protein>
<gene>
    <name type="primary">OR9I1</name>
</gene>
<evidence type="ECO:0000255" key="1"/>
<evidence type="ECO:0000255" key="2">
    <source>
        <dbReference type="PROSITE-ProRule" id="PRU00521"/>
    </source>
</evidence>
<evidence type="ECO:0000305" key="3"/>
<reference key="1">
    <citation type="submission" date="2001-07" db="EMBL/GenBank/DDBJ databases">
        <title>Genome-wide discovery and analysis of human seven transmembrane helix receptor genes.</title>
        <authorList>
            <person name="Suwa M."/>
            <person name="Sato T."/>
            <person name="Okouchi I."/>
            <person name="Arita M."/>
            <person name="Futami K."/>
            <person name="Matsumoto S."/>
            <person name="Tsutsumi S."/>
            <person name="Aburatani H."/>
            <person name="Asai K."/>
            <person name="Akiyama Y."/>
        </authorList>
    </citation>
    <scope>NUCLEOTIDE SEQUENCE [GENOMIC DNA]</scope>
</reference>
<reference key="2">
    <citation type="submission" date="2005-07" db="EMBL/GenBank/DDBJ databases">
        <authorList>
            <person name="Mural R.J."/>
            <person name="Istrail S."/>
            <person name="Sutton G.G."/>
            <person name="Florea L."/>
            <person name="Halpern A.L."/>
            <person name="Mobarry C.M."/>
            <person name="Lippert R."/>
            <person name="Walenz B."/>
            <person name="Shatkay H."/>
            <person name="Dew I."/>
            <person name="Miller J.R."/>
            <person name="Flanigan M.J."/>
            <person name="Edwards N.J."/>
            <person name="Bolanos R."/>
            <person name="Fasulo D."/>
            <person name="Halldorsson B.V."/>
            <person name="Hannenhalli S."/>
            <person name="Turner R."/>
            <person name="Yooseph S."/>
            <person name="Lu F."/>
            <person name="Nusskern D.R."/>
            <person name="Shue B.C."/>
            <person name="Zheng X.H."/>
            <person name="Zhong F."/>
            <person name="Delcher A.L."/>
            <person name="Huson D.H."/>
            <person name="Kravitz S.A."/>
            <person name="Mouchard L."/>
            <person name="Reinert K."/>
            <person name="Remington K.A."/>
            <person name="Clark A.G."/>
            <person name="Waterman M.S."/>
            <person name="Eichler E.E."/>
            <person name="Adams M.D."/>
            <person name="Hunkapiller M.W."/>
            <person name="Myers E.W."/>
            <person name="Venter J.C."/>
        </authorList>
    </citation>
    <scope>NUCLEOTIDE SEQUENCE [LARGE SCALE GENOMIC DNA]</scope>
</reference>
<reference key="3">
    <citation type="journal article" date="2002" name="Genomics">
        <title>DEFOG: a practical scheme for deciphering families of genes.</title>
        <authorList>
            <person name="Fuchs T."/>
            <person name="Malecova B."/>
            <person name="Linhart C."/>
            <person name="Sharan R."/>
            <person name="Khen M."/>
            <person name="Herwig R."/>
            <person name="Shmulevich D."/>
            <person name="Elkon R."/>
            <person name="Steinfath M."/>
            <person name="O'Brien J.K."/>
            <person name="Radelof U."/>
            <person name="Lehrach H."/>
            <person name="Lancet D."/>
            <person name="Shamir R."/>
        </authorList>
    </citation>
    <scope>NUCLEOTIDE SEQUENCE [GENOMIC DNA] OF 68-283</scope>
</reference>
<reference key="4">
    <citation type="journal article" date="2004" name="Proc. Natl. Acad. Sci. U.S.A.">
        <title>The human olfactory receptor gene family.</title>
        <authorList>
            <person name="Malnic B."/>
            <person name="Godfrey P.A."/>
            <person name="Buck L.B."/>
        </authorList>
    </citation>
    <scope>IDENTIFICATION</scope>
</reference>
<reference key="5">
    <citation type="journal article" date="2004" name="Proc. Natl. Acad. Sci. U.S.A.">
        <authorList>
            <person name="Malnic B."/>
            <person name="Godfrey P.A."/>
            <person name="Buck L.B."/>
        </authorList>
    </citation>
    <scope>ERRATUM OF PUBMED:14983052</scope>
</reference>
<proteinExistence type="inferred from homology"/>
<name>OR9I1_HUMAN</name>
<organism>
    <name type="scientific">Homo sapiens</name>
    <name type="common">Human</name>
    <dbReference type="NCBI Taxonomy" id="9606"/>
    <lineage>
        <taxon>Eukaryota</taxon>
        <taxon>Metazoa</taxon>
        <taxon>Chordata</taxon>
        <taxon>Craniata</taxon>
        <taxon>Vertebrata</taxon>
        <taxon>Euteleostomi</taxon>
        <taxon>Mammalia</taxon>
        <taxon>Eutheria</taxon>
        <taxon>Euarchontoglires</taxon>
        <taxon>Primates</taxon>
        <taxon>Haplorrhini</taxon>
        <taxon>Catarrhini</taxon>
        <taxon>Hominidae</taxon>
        <taxon>Homo</taxon>
    </lineage>
</organism>
<comment type="function">
    <text evidence="3">Odorant receptor.</text>
</comment>
<comment type="subcellular location">
    <subcellularLocation>
        <location>Cell membrane</location>
        <topology>Multi-pass membrane protein</topology>
    </subcellularLocation>
</comment>
<comment type="similarity">
    <text evidence="2">Belongs to the G-protein coupled receptor 1 family.</text>
</comment>
<comment type="online information" name="Human Olfactory Receptor Data Exploratorium (HORDE)">
    <link uri="http://genome.weizmann.ac.il/horde/card/index/symbol:OR9I1"/>
</comment>
<dbReference type="EMBL" id="AB065733">
    <property type="protein sequence ID" value="BAC05954.1"/>
    <property type="molecule type" value="Genomic_DNA"/>
</dbReference>
<dbReference type="EMBL" id="CH471076">
    <property type="protein sequence ID" value="EAW73796.1"/>
    <property type="molecule type" value="Genomic_DNA"/>
</dbReference>
<dbReference type="EMBL" id="AF399531">
    <property type="protein sequence ID" value="AAK95016.1"/>
    <property type="molecule type" value="Genomic_DNA"/>
</dbReference>
<dbReference type="EMBL" id="BK004292">
    <property type="protein sequence ID" value="DAA04690.1"/>
    <property type="molecule type" value="Genomic_DNA"/>
</dbReference>
<dbReference type="CCDS" id="CCDS31542.1"/>
<dbReference type="RefSeq" id="NP_001005211.1">
    <property type="nucleotide sequence ID" value="NM_001005211.2"/>
</dbReference>
<dbReference type="SMR" id="Q8NGQ6"/>
<dbReference type="BioGRID" id="128599">
    <property type="interactions" value="1"/>
</dbReference>
<dbReference type="FunCoup" id="Q8NGQ6">
    <property type="interactions" value="416"/>
</dbReference>
<dbReference type="STRING" id="9606.ENSP00000493370"/>
<dbReference type="GlyCosmos" id="Q8NGQ6">
    <property type="glycosylation" value="1 site, No reported glycans"/>
</dbReference>
<dbReference type="GlyGen" id="Q8NGQ6">
    <property type="glycosylation" value="1 site"/>
</dbReference>
<dbReference type="iPTMnet" id="Q8NGQ6"/>
<dbReference type="PhosphoSitePlus" id="Q8NGQ6"/>
<dbReference type="BioMuta" id="OR9I1"/>
<dbReference type="DMDM" id="38372750"/>
<dbReference type="jPOST" id="Q8NGQ6"/>
<dbReference type="MassIVE" id="Q8NGQ6"/>
<dbReference type="PaxDb" id="9606-ENSP00000302606"/>
<dbReference type="Antibodypedia" id="70677">
    <property type="antibodies" value="21 antibodies from 13 providers"/>
</dbReference>
<dbReference type="DNASU" id="219954"/>
<dbReference type="Ensembl" id="ENST00000641439.1">
    <property type="protein sequence ID" value="ENSP00000493370.1"/>
    <property type="gene ID" value="ENSG00000172377.3"/>
</dbReference>
<dbReference type="Ensembl" id="ENST00000641478.1">
    <property type="protein sequence ID" value="ENSP00000493104.1"/>
    <property type="gene ID" value="ENSG00000172377.3"/>
</dbReference>
<dbReference type="GeneID" id="219954"/>
<dbReference type="KEGG" id="hsa:219954"/>
<dbReference type="MANE-Select" id="ENST00000641439.1">
    <property type="protein sequence ID" value="ENSP00000493370.1"/>
    <property type="RefSeq nucleotide sequence ID" value="NM_001005211.2"/>
    <property type="RefSeq protein sequence ID" value="NP_001005211.1"/>
</dbReference>
<dbReference type="UCSC" id="uc001nml.1">
    <property type="organism name" value="human"/>
</dbReference>
<dbReference type="AGR" id="HGNC:14718"/>
<dbReference type="CTD" id="219954"/>
<dbReference type="GeneCards" id="OR9I1"/>
<dbReference type="HGNC" id="HGNC:14718">
    <property type="gene designation" value="OR9I1"/>
</dbReference>
<dbReference type="HPA" id="ENSG00000172377">
    <property type="expression patterns" value="Not detected"/>
</dbReference>
<dbReference type="MIM" id="620828">
    <property type="type" value="gene"/>
</dbReference>
<dbReference type="neXtProt" id="NX_Q8NGQ6"/>
<dbReference type="PharmGKB" id="PA32794"/>
<dbReference type="VEuPathDB" id="HostDB:ENSG00000172377"/>
<dbReference type="eggNOG" id="ENOG502RF13">
    <property type="taxonomic scope" value="Eukaryota"/>
</dbReference>
<dbReference type="GeneTree" id="ENSGT01120000271831"/>
<dbReference type="HOGENOM" id="CLU_012526_1_0_1"/>
<dbReference type="InParanoid" id="Q8NGQ6"/>
<dbReference type="OMA" id="TLSFCDH"/>
<dbReference type="OrthoDB" id="9825976at2759"/>
<dbReference type="PAN-GO" id="Q8NGQ6">
    <property type="GO annotations" value="4 GO annotations based on evolutionary models"/>
</dbReference>
<dbReference type="PhylomeDB" id="Q8NGQ6"/>
<dbReference type="TreeFam" id="TF337111"/>
<dbReference type="PathwayCommons" id="Q8NGQ6"/>
<dbReference type="Reactome" id="R-HSA-9752946">
    <property type="pathway name" value="Expression and translocation of olfactory receptors"/>
</dbReference>
<dbReference type="BioGRID-ORCS" id="219954">
    <property type="hits" value="17 hits in 747 CRISPR screens"/>
</dbReference>
<dbReference type="GeneWiki" id="OR9I1"/>
<dbReference type="GenomeRNAi" id="219954"/>
<dbReference type="Pharos" id="Q8NGQ6">
    <property type="development level" value="Tdark"/>
</dbReference>
<dbReference type="PRO" id="PR:Q8NGQ6"/>
<dbReference type="Proteomes" id="UP000005640">
    <property type="component" value="Chromosome 11"/>
</dbReference>
<dbReference type="RNAct" id="Q8NGQ6">
    <property type="molecule type" value="protein"/>
</dbReference>
<dbReference type="ExpressionAtlas" id="Q8NGQ6">
    <property type="expression patterns" value="baseline and differential"/>
</dbReference>
<dbReference type="GO" id="GO:0005886">
    <property type="term" value="C:plasma membrane"/>
    <property type="evidence" value="ECO:0007669"/>
    <property type="project" value="UniProtKB-SubCell"/>
</dbReference>
<dbReference type="GO" id="GO:0004930">
    <property type="term" value="F:G protein-coupled receptor activity"/>
    <property type="evidence" value="ECO:0007669"/>
    <property type="project" value="UniProtKB-KW"/>
</dbReference>
<dbReference type="GO" id="GO:0005549">
    <property type="term" value="F:odorant binding"/>
    <property type="evidence" value="ECO:0000318"/>
    <property type="project" value="GO_Central"/>
</dbReference>
<dbReference type="GO" id="GO:0004984">
    <property type="term" value="F:olfactory receptor activity"/>
    <property type="evidence" value="ECO:0000318"/>
    <property type="project" value="GO_Central"/>
</dbReference>
<dbReference type="GO" id="GO:0007186">
    <property type="term" value="P:G protein-coupled receptor signaling pathway"/>
    <property type="evidence" value="ECO:0000318"/>
    <property type="project" value="GO_Central"/>
</dbReference>
<dbReference type="GO" id="GO:0007608">
    <property type="term" value="P:sensory perception of smell"/>
    <property type="evidence" value="ECO:0000318"/>
    <property type="project" value="GO_Central"/>
</dbReference>
<dbReference type="CDD" id="cd15230">
    <property type="entry name" value="7tmA_OR5-like"/>
    <property type="match status" value="1"/>
</dbReference>
<dbReference type="FunFam" id="1.20.1070.10:FF:000003">
    <property type="entry name" value="Olfactory receptor"/>
    <property type="match status" value="1"/>
</dbReference>
<dbReference type="Gene3D" id="1.20.1070.10">
    <property type="entry name" value="Rhodopsin 7-helix transmembrane proteins"/>
    <property type="match status" value="1"/>
</dbReference>
<dbReference type="InterPro" id="IPR000276">
    <property type="entry name" value="GPCR_Rhodpsn"/>
</dbReference>
<dbReference type="InterPro" id="IPR017452">
    <property type="entry name" value="GPCR_Rhodpsn_7TM"/>
</dbReference>
<dbReference type="InterPro" id="IPR000725">
    <property type="entry name" value="Olfact_rcpt"/>
</dbReference>
<dbReference type="PANTHER" id="PTHR48018">
    <property type="entry name" value="OLFACTORY RECEPTOR"/>
    <property type="match status" value="1"/>
</dbReference>
<dbReference type="Pfam" id="PF13853">
    <property type="entry name" value="7tm_4"/>
    <property type="match status" value="1"/>
</dbReference>
<dbReference type="PRINTS" id="PR00237">
    <property type="entry name" value="GPCRRHODOPSN"/>
</dbReference>
<dbReference type="PRINTS" id="PR00245">
    <property type="entry name" value="OLFACTORYR"/>
</dbReference>
<dbReference type="SUPFAM" id="SSF81321">
    <property type="entry name" value="Family A G protein-coupled receptor-like"/>
    <property type="match status" value="1"/>
</dbReference>
<dbReference type="PROSITE" id="PS00237">
    <property type="entry name" value="G_PROTEIN_RECEP_F1_1"/>
    <property type="match status" value="1"/>
</dbReference>
<dbReference type="PROSITE" id="PS50262">
    <property type="entry name" value="G_PROTEIN_RECEP_F1_2"/>
    <property type="match status" value="1"/>
</dbReference>
<sequence length="314" mass="34908">MAKNNLTRVTEFILMGFMDHPKLEIPLFLVFLSFYLVTLLGNVGMIMLIQVDVKLYTPMYFFLSHLSLLDACYTSVITPQILATLATGKTVISYGHCAAQFFLFTICAGTECFLLAVMAYDRYAAIRNPLLYTVAMNPRLCWSLVVGAYVCGVSGAILRTTCTFTLSFCKDNQINFFFCDLPPLLKLACSDTANIEIVIIFFGNFVILANASVILISYLLIIKTILKVKSSGGRAKTFSTCASHITAVALFFGALIFMYLQSGSGKSLEEDKVVSVFYTVVIPMLNPLIYSLRNKDVKDAFRKVARRLQVSLSM</sequence>